<gene>
    <name evidence="1" type="primary">dapA</name>
    <name type="ordered locus">P9211_17791</name>
</gene>
<dbReference type="EC" id="4.3.3.7" evidence="1"/>
<dbReference type="EMBL" id="CP000878">
    <property type="protein sequence ID" value="ABX09710.1"/>
    <property type="molecule type" value="Genomic_DNA"/>
</dbReference>
<dbReference type="RefSeq" id="WP_012196330.1">
    <property type="nucleotide sequence ID" value="NC_009976.1"/>
</dbReference>
<dbReference type="SMR" id="A9BD97"/>
<dbReference type="STRING" id="93059.P9211_17791"/>
<dbReference type="KEGG" id="pmj:P9211_17791"/>
<dbReference type="eggNOG" id="COG0329">
    <property type="taxonomic scope" value="Bacteria"/>
</dbReference>
<dbReference type="HOGENOM" id="CLU_049343_7_1_3"/>
<dbReference type="OrthoDB" id="9782828at2"/>
<dbReference type="UniPathway" id="UPA00034">
    <property type="reaction ID" value="UER00017"/>
</dbReference>
<dbReference type="Proteomes" id="UP000000788">
    <property type="component" value="Chromosome"/>
</dbReference>
<dbReference type="GO" id="GO:0005829">
    <property type="term" value="C:cytosol"/>
    <property type="evidence" value="ECO:0007669"/>
    <property type="project" value="TreeGrafter"/>
</dbReference>
<dbReference type="GO" id="GO:0008840">
    <property type="term" value="F:4-hydroxy-tetrahydrodipicolinate synthase activity"/>
    <property type="evidence" value="ECO:0007669"/>
    <property type="project" value="UniProtKB-UniRule"/>
</dbReference>
<dbReference type="GO" id="GO:0019877">
    <property type="term" value="P:diaminopimelate biosynthetic process"/>
    <property type="evidence" value="ECO:0007669"/>
    <property type="project" value="UniProtKB-UniRule"/>
</dbReference>
<dbReference type="GO" id="GO:0009089">
    <property type="term" value="P:lysine biosynthetic process via diaminopimelate"/>
    <property type="evidence" value="ECO:0007669"/>
    <property type="project" value="UniProtKB-UniRule"/>
</dbReference>
<dbReference type="CDD" id="cd00950">
    <property type="entry name" value="DHDPS"/>
    <property type="match status" value="1"/>
</dbReference>
<dbReference type="Gene3D" id="3.20.20.70">
    <property type="entry name" value="Aldolase class I"/>
    <property type="match status" value="1"/>
</dbReference>
<dbReference type="HAMAP" id="MF_00418">
    <property type="entry name" value="DapA"/>
    <property type="match status" value="1"/>
</dbReference>
<dbReference type="InterPro" id="IPR013785">
    <property type="entry name" value="Aldolase_TIM"/>
</dbReference>
<dbReference type="InterPro" id="IPR005263">
    <property type="entry name" value="DapA"/>
</dbReference>
<dbReference type="InterPro" id="IPR002220">
    <property type="entry name" value="DapA-like"/>
</dbReference>
<dbReference type="InterPro" id="IPR020624">
    <property type="entry name" value="Schiff_base-form_aldolases_CS"/>
</dbReference>
<dbReference type="NCBIfam" id="TIGR00674">
    <property type="entry name" value="dapA"/>
    <property type="match status" value="1"/>
</dbReference>
<dbReference type="PANTHER" id="PTHR12128:SF66">
    <property type="entry name" value="4-HYDROXY-2-OXOGLUTARATE ALDOLASE, MITOCHONDRIAL"/>
    <property type="match status" value="1"/>
</dbReference>
<dbReference type="PANTHER" id="PTHR12128">
    <property type="entry name" value="DIHYDRODIPICOLINATE SYNTHASE"/>
    <property type="match status" value="1"/>
</dbReference>
<dbReference type="Pfam" id="PF00701">
    <property type="entry name" value="DHDPS"/>
    <property type="match status" value="1"/>
</dbReference>
<dbReference type="PIRSF" id="PIRSF001365">
    <property type="entry name" value="DHDPS"/>
    <property type="match status" value="1"/>
</dbReference>
<dbReference type="PRINTS" id="PR00146">
    <property type="entry name" value="DHPICSNTHASE"/>
</dbReference>
<dbReference type="SMART" id="SM01130">
    <property type="entry name" value="DHDPS"/>
    <property type="match status" value="1"/>
</dbReference>
<dbReference type="SUPFAM" id="SSF51569">
    <property type="entry name" value="Aldolase"/>
    <property type="match status" value="1"/>
</dbReference>
<dbReference type="PROSITE" id="PS00665">
    <property type="entry name" value="DHDPS_1"/>
    <property type="match status" value="1"/>
</dbReference>
<protein>
    <recommendedName>
        <fullName evidence="1">4-hydroxy-tetrahydrodipicolinate synthase</fullName>
        <shortName evidence="1">HTPA synthase</shortName>
        <ecNumber evidence="1">4.3.3.7</ecNumber>
    </recommendedName>
</protein>
<feature type="chain" id="PRO_1000124059" description="4-hydroxy-tetrahydrodipicolinate synthase">
    <location>
        <begin position="1"/>
        <end position="302"/>
    </location>
</feature>
<feature type="active site" description="Proton donor/acceptor" evidence="1">
    <location>
        <position position="144"/>
    </location>
</feature>
<feature type="active site" description="Schiff-base intermediate with substrate" evidence="1">
    <location>
        <position position="172"/>
    </location>
</feature>
<feature type="binding site" evidence="1">
    <location>
        <position position="55"/>
    </location>
    <ligand>
        <name>pyruvate</name>
        <dbReference type="ChEBI" id="CHEBI:15361"/>
    </ligand>
</feature>
<feature type="binding site" evidence="1">
    <location>
        <position position="214"/>
    </location>
    <ligand>
        <name>pyruvate</name>
        <dbReference type="ChEBI" id="CHEBI:15361"/>
    </ligand>
</feature>
<feature type="site" description="Part of a proton relay during catalysis" evidence="1">
    <location>
        <position position="54"/>
    </location>
</feature>
<feature type="site" description="Part of a proton relay during catalysis" evidence="1">
    <location>
        <position position="117"/>
    </location>
</feature>
<reference key="1">
    <citation type="journal article" date="2007" name="PLoS Genet.">
        <title>Patterns and implications of gene gain and loss in the evolution of Prochlorococcus.</title>
        <authorList>
            <person name="Kettler G.C."/>
            <person name="Martiny A.C."/>
            <person name="Huang K."/>
            <person name="Zucker J."/>
            <person name="Coleman M.L."/>
            <person name="Rodrigue S."/>
            <person name="Chen F."/>
            <person name="Lapidus A."/>
            <person name="Ferriera S."/>
            <person name="Johnson J."/>
            <person name="Steglich C."/>
            <person name="Church G.M."/>
            <person name="Richardson P."/>
            <person name="Chisholm S.W."/>
        </authorList>
    </citation>
    <scope>NUCLEOTIDE SEQUENCE [LARGE SCALE GENOMIC DNA]</scope>
    <source>
        <strain>MIT 9211</strain>
    </source>
</reference>
<organism>
    <name type="scientific">Prochlorococcus marinus (strain MIT 9211)</name>
    <dbReference type="NCBI Taxonomy" id="93059"/>
    <lineage>
        <taxon>Bacteria</taxon>
        <taxon>Bacillati</taxon>
        <taxon>Cyanobacteriota</taxon>
        <taxon>Cyanophyceae</taxon>
        <taxon>Synechococcales</taxon>
        <taxon>Prochlorococcaceae</taxon>
        <taxon>Prochlorococcus</taxon>
    </lineage>
</organism>
<name>DAPA_PROM4</name>
<keyword id="KW-0028">Amino-acid biosynthesis</keyword>
<keyword id="KW-0963">Cytoplasm</keyword>
<keyword id="KW-0220">Diaminopimelate biosynthesis</keyword>
<keyword id="KW-0456">Lyase</keyword>
<keyword id="KW-0457">Lysine biosynthesis</keyword>
<keyword id="KW-1185">Reference proteome</keyword>
<keyword id="KW-0704">Schiff base</keyword>
<proteinExistence type="inferred from homology"/>
<sequence>MSSAAHLSPKPFGRLLTAMVTPFDSDGKVDYAIAGRLARYLVDEGSDGIVVCGTTGESPTLSWSEQHQLLETVKSSVGKAVKVLAGTGSNSTAEAIEATVKAAELGADGALVVVPYYNKPPQEGLEIHFRSIANAAPDLPLMLYNIPGRTGSSIHPATVKRLMNCPNIISYKAASGTTSEVTDLRMQCGSQLAVYSGDDGLLLPMMSVGAVGVVSVASHIVGSRIKAMIDAYSTGQVNIALAYHEQLQPLFRALFATTNPIPVKAALEAIGWQVGSPRRPLSPLKKQMKEDLIDIIKSLRQI</sequence>
<evidence type="ECO:0000255" key="1">
    <source>
        <dbReference type="HAMAP-Rule" id="MF_00418"/>
    </source>
</evidence>
<evidence type="ECO:0000305" key="2"/>
<comment type="function">
    <text evidence="1">Catalyzes the condensation of (S)-aspartate-beta-semialdehyde [(S)-ASA] and pyruvate to 4-hydroxy-tetrahydrodipicolinate (HTPA).</text>
</comment>
<comment type="catalytic activity">
    <reaction evidence="1">
        <text>L-aspartate 4-semialdehyde + pyruvate = (2S,4S)-4-hydroxy-2,3,4,5-tetrahydrodipicolinate + H2O + H(+)</text>
        <dbReference type="Rhea" id="RHEA:34171"/>
        <dbReference type="ChEBI" id="CHEBI:15361"/>
        <dbReference type="ChEBI" id="CHEBI:15377"/>
        <dbReference type="ChEBI" id="CHEBI:15378"/>
        <dbReference type="ChEBI" id="CHEBI:67139"/>
        <dbReference type="ChEBI" id="CHEBI:537519"/>
        <dbReference type="EC" id="4.3.3.7"/>
    </reaction>
</comment>
<comment type="pathway">
    <text evidence="1">Amino-acid biosynthesis; L-lysine biosynthesis via DAP pathway; (S)-tetrahydrodipicolinate from L-aspartate: step 3/4.</text>
</comment>
<comment type="subunit">
    <text evidence="1">Homotetramer; dimer of dimers.</text>
</comment>
<comment type="subcellular location">
    <subcellularLocation>
        <location evidence="1">Cytoplasm</location>
    </subcellularLocation>
</comment>
<comment type="similarity">
    <text evidence="1">Belongs to the DapA family.</text>
</comment>
<comment type="caution">
    <text evidence="2">Was originally thought to be a dihydrodipicolinate synthase (DHDPS), catalyzing the condensation of (S)-aspartate-beta-semialdehyde [(S)-ASA] and pyruvate to dihydrodipicolinate (DHDP). However, it was shown in E.coli that the product of the enzymatic reaction is not dihydrodipicolinate but in fact (4S)-4-hydroxy-2,3,4,5-tetrahydro-(2S)-dipicolinic acid (HTPA), and that the consecutive dehydration reaction leading to DHDP is not spontaneous but catalyzed by DapB.</text>
</comment>
<accession>A9BD97</accession>